<dbReference type="EMBL" id="AJ938182">
    <property type="protein sequence ID" value="CAI80138.1"/>
    <property type="molecule type" value="Genomic_DNA"/>
</dbReference>
<dbReference type="RefSeq" id="WP_000157650.1">
    <property type="nucleotide sequence ID" value="NC_007622.1"/>
</dbReference>
<dbReference type="SMR" id="Q2YVY4"/>
<dbReference type="KEGG" id="sab:SAB0450"/>
<dbReference type="HOGENOM" id="CLU_075939_2_1_9"/>
<dbReference type="GO" id="GO:0022625">
    <property type="term" value="C:cytosolic large ribosomal subunit"/>
    <property type="evidence" value="ECO:0007669"/>
    <property type="project" value="TreeGrafter"/>
</dbReference>
<dbReference type="GO" id="GO:0008097">
    <property type="term" value="F:5S rRNA binding"/>
    <property type="evidence" value="ECO:0007669"/>
    <property type="project" value="InterPro"/>
</dbReference>
<dbReference type="GO" id="GO:0003735">
    <property type="term" value="F:structural constituent of ribosome"/>
    <property type="evidence" value="ECO:0007669"/>
    <property type="project" value="InterPro"/>
</dbReference>
<dbReference type="GO" id="GO:0006412">
    <property type="term" value="P:translation"/>
    <property type="evidence" value="ECO:0007669"/>
    <property type="project" value="UniProtKB-UniRule"/>
</dbReference>
<dbReference type="CDD" id="cd00495">
    <property type="entry name" value="Ribosomal_L25_TL5_CTC"/>
    <property type="match status" value="1"/>
</dbReference>
<dbReference type="FunFam" id="2.40.240.10:FF:000013">
    <property type="entry name" value="50S ribosomal protein L25"/>
    <property type="match status" value="1"/>
</dbReference>
<dbReference type="Gene3D" id="2.170.120.20">
    <property type="entry name" value="Ribosomal protein L25, beta domain"/>
    <property type="match status" value="1"/>
</dbReference>
<dbReference type="Gene3D" id="2.40.240.10">
    <property type="entry name" value="Ribosomal Protein L25, Chain P"/>
    <property type="match status" value="1"/>
</dbReference>
<dbReference type="HAMAP" id="MF_01334">
    <property type="entry name" value="Ribosomal_bL25_CTC"/>
    <property type="match status" value="1"/>
</dbReference>
<dbReference type="InterPro" id="IPR020056">
    <property type="entry name" value="Rbsml_bL25/Gln-tRNA_synth_N"/>
</dbReference>
<dbReference type="InterPro" id="IPR011035">
    <property type="entry name" value="Ribosomal_bL25/Gln-tRNA_synth"/>
</dbReference>
<dbReference type="InterPro" id="IPR020057">
    <property type="entry name" value="Ribosomal_bL25_b-dom"/>
</dbReference>
<dbReference type="InterPro" id="IPR037121">
    <property type="entry name" value="Ribosomal_bL25_C"/>
</dbReference>
<dbReference type="InterPro" id="IPR001021">
    <property type="entry name" value="Ribosomal_bL25_long"/>
</dbReference>
<dbReference type="InterPro" id="IPR029751">
    <property type="entry name" value="Ribosomal_L25_dom"/>
</dbReference>
<dbReference type="InterPro" id="IPR020930">
    <property type="entry name" value="Ribosomal_uL5_bac-type"/>
</dbReference>
<dbReference type="NCBIfam" id="TIGR00731">
    <property type="entry name" value="bL25_bact_ctc"/>
    <property type="match status" value="1"/>
</dbReference>
<dbReference type="NCBIfam" id="NF004133">
    <property type="entry name" value="PRK05618.2-4"/>
    <property type="match status" value="1"/>
</dbReference>
<dbReference type="NCBIfam" id="NF004134">
    <property type="entry name" value="PRK05618.2-5"/>
    <property type="match status" value="1"/>
</dbReference>
<dbReference type="PANTHER" id="PTHR33284">
    <property type="entry name" value="RIBOSOMAL PROTEIN L25/GLN-TRNA SYNTHETASE, ANTI-CODON-BINDING DOMAIN-CONTAINING PROTEIN"/>
    <property type="match status" value="1"/>
</dbReference>
<dbReference type="PANTHER" id="PTHR33284:SF1">
    <property type="entry name" value="RIBOSOMAL PROTEIN L25_GLN-TRNA SYNTHETASE, ANTI-CODON-BINDING DOMAIN-CONTAINING PROTEIN"/>
    <property type="match status" value="1"/>
</dbReference>
<dbReference type="Pfam" id="PF01386">
    <property type="entry name" value="Ribosomal_L25p"/>
    <property type="match status" value="1"/>
</dbReference>
<dbReference type="Pfam" id="PF14693">
    <property type="entry name" value="Ribosomal_TL5_C"/>
    <property type="match status" value="1"/>
</dbReference>
<dbReference type="SUPFAM" id="SSF50715">
    <property type="entry name" value="Ribosomal protein L25-like"/>
    <property type="match status" value="1"/>
</dbReference>
<feature type="chain" id="PRO_0000244243" description="Large ribosomal subunit protein bL25">
    <location>
        <begin position="1"/>
        <end position="217"/>
    </location>
</feature>
<feature type="region of interest" description="Disordered" evidence="2">
    <location>
        <begin position="178"/>
        <end position="217"/>
    </location>
</feature>
<feature type="compositionally biased region" description="Acidic residues" evidence="2">
    <location>
        <begin position="184"/>
        <end position="205"/>
    </location>
</feature>
<feature type="compositionally biased region" description="Basic and acidic residues" evidence="2">
    <location>
        <begin position="206"/>
        <end position="217"/>
    </location>
</feature>
<organism>
    <name type="scientific">Staphylococcus aureus (strain bovine RF122 / ET3-1)</name>
    <dbReference type="NCBI Taxonomy" id="273036"/>
    <lineage>
        <taxon>Bacteria</taxon>
        <taxon>Bacillati</taxon>
        <taxon>Bacillota</taxon>
        <taxon>Bacilli</taxon>
        <taxon>Bacillales</taxon>
        <taxon>Staphylococcaceae</taxon>
        <taxon>Staphylococcus</taxon>
    </lineage>
</organism>
<reference key="1">
    <citation type="journal article" date="2007" name="PLoS ONE">
        <title>Molecular correlates of host specialization in Staphylococcus aureus.</title>
        <authorList>
            <person name="Herron-Olson L."/>
            <person name="Fitzgerald J.R."/>
            <person name="Musser J.M."/>
            <person name="Kapur V."/>
        </authorList>
    </citation>
    <scope>NUCLEOTIDE SEQUENCE [LARGE SCALE GENOMIC DNA]</scope>
    <source>
        <strain>bovine RF122 / ET3-1</strain>
    </source>
</reference>
<accession>Q2YVY4</accession>
<protein>
    <recommendedName>
        <fullName evidence="1">Large ribosomal subunit protein bL25</fullName>
    </recommendedName>
    <alternativeName>
        <fullName evidence="3">50S ribosomal protein L25</fullName>
    </alternativeName>
    <alternativeName>
        <fullName evidence="1">General stress protein CTC</fullName>
    </alternativeName>
</protein>
<name>RL25_STAAB</name>
<gene>
    <name evidence="1" type="primary">rplY</name>
    <name evidence="1" type="synonym">ctc</name>
    <name type="ordered locus">SAB0450</name>
</gene>
<evidence type="ECO:0000255" key="1">
    <source>
        <dbReference type="HAMAP-Rule" id="MF_01334"/>
    </source>
</evidence>
<evidence type="ECO:0000256" key="2">
    <source>
        <dbReference type="SAM" id="MobiDB-lite"/>
    </source>
</evidence>
<evidence type="ECO:0000305" key="3"/>
<comment type="function">
    <text evidence="1">This is one of the proteins that binds to the 5S RNA in the ribosome where it forms part of the central protuberance.</text>
</comment>
<comment type="subunit">
    <text evidence="1">Part of the 50S ribosomal subunit; part of the 5S rRNA/L5/L18/L25 subcomplex. Contacts the 5S rRNA. Binds to the 5S rRNA independently of L5 and L18.</text>
</comment>
<comment type="similarity">
    <text evidence="1">Belongs to the bacterial ribosomal protein bL25 family. CTC subfamily.</text>
</comment>
<proteinExistence type="inferred from homology"/>
<sequence length="217" mass="23788">MASLKSIIRQGKQTRSDLKQLRKSGKVPAVVYGYGTKNVSVKVDEVEFIKVIREVGRNGVIELGVGSKTIKVMVADYQFDPLKNQITHIDFLAINMSEERTVEVPVQLVGEAVGAKEGGVVEQPLFNLEVTATPDNIPEAIEVDITELNINDSLTVADVKVTGDFKIENDSAESVVTVVAPTEEPTEEEIEAMEGEQQTEEPEVVGESKEDEEKTEE</sequence>
<keyword id="KW-0687">Ribonucleoprotein</keyword>
<keyword id="KW-0689">Ribosomal protein</keyword>
<keyword id="KW-0694">RNA-binding</keyword>
<keyword id="KW-0699">rRNA-binding</keyword>